<evidence type="ECO:0000255" key="1">
    <source>
        <dbReference type="HAMAP-Rule" id="MF_00211"/>
    </source>
</evidence>
<comment type="function">
    <text evidence="1">Catalyzes the transfer of the phosphoribosyl group of 5-phosphorylribose-1-pyrophosphate (PRPP) to anthranilate to yield N-(5'-phosphoribosyl)-anthranilate (PRA).</text>
</comment>
<comment type="catalytic activity">
    <reaction evidence="1">
        <text>N-(5-phospho-beta-D-ribosyl)anthranilate + diphosphate = 5-phospho-alpha-D-ribose 1-diphosphate + anthranilate</text>
        <dbReference type="Rhea" id="RHEA:11768"/>
        <dbReference type="ChEBI" id="CHEBI:16567"/>
        <dbReference type="ChEBI" id="CHEBI:18277"/>
        <dbReference type="ChEBI" id="CHEBI:33019"/>
        <dbReference type="ChEBI" id="CHEBI:58017"/>
        <dbReference type="EC" id="2.4.2.18"/>
    </reaction>
</comment>
<comment type="cofactor">
    <cofactor evidence="1">
        <name>Mg(2+)</name>
        <dbReference type="ChEBI" id="CHEBI:18420"/>
    </cofactor>
    <text evidence="1">Binds 2 magnesium ions per monomer.</text>
</comment>
<comment type="pathway">
    <text evidence="1">Amino-acid biosynthesis; L-tryptophan biosynthesis; L-tryptophan from chorismate: step 2/5.</text>
</comment>
<comment type="subunit">
    <text evidence="1">Homodimer.</text>
</comment>
<comment type="similarity">
    <text evidence="1">Belongs to the anthranilate phosphoribosyltransferase family.</text>
</comment>
<proteinExistence type="inferred from homology"/>
<accession>A2SLH5</accession>
<reference key="1">
    <citation type="journal article" date="2007" name="J. Bacteriol.">
        <title>Whole-genome analysis of the methyl tert-butyl ether-degrading beta-proteobacterium Methylibium petroleiphilum PM1.</title>
        <authorList>
            <person name="Kane S.R."/>
            <person name="Chakicherla A.Y."/>
            <person name="Chain P.S.G."/>
            <person name="Schmidt R."/>
            <person name="Shin M.W."/>
            <person name="Legler T.C."/>
            <person name="Scow K.M."/>
            <person name="Larimer F.W."/>
            <person name="Lucas S.M."/>
            <person name="Richardson P.M."/>
            <person name="Hristova K.R."/>
        </authorList>
    </citation>
    <scope>NUCLEOTIDE SEQUENCE [LARGE SCALE GENOMIC DNA]</scope>
    <source>
        <strain>ATCC BAA-1232 / LMG 22953 / PM1</strain>
    </source>
</reference>
<gene>
    <name evidence="1" type="primary">trpD</name>
    <name type="ordered locus">Mpe_A3461</name>
</gene>
<keyword id="KW-0028">Amino-acid biosynthesis</keyword>
<keyword id="KW-0057">Aromatic amino acid biosynthesis</keyword>
<keyword id="KW-0328">Glycosyltransferase</keyword>
<keyword id="KW-0460">Magnesium</keyword>
<keyword id="KW-0479">Metal-binding</keyword>
<keyword id="KW-1185">Reference proteome</keyword>
<keyword id="KW-0808">Transferase</keyword>
<keyword id="KW-0822">Tryptophan biosynthesis</keyword>
<feature type="chain" id="PRO_0000325434" description="Anthranilate phosphoribosyltransferase">
    <location>
        <begin position="1"/>
        <end position="344"/>
    </location>
</feature>
<feature type="binding site" evidence="1">
    <location>
        <position position="83"/>
    </location>
    <ligand>
        <name>5-phospho-alpha-D-ribose 1-diphosphate</name>
        <dbReference type="ChEBI" id="CHEBI:58017"/>
    </ligand>
</feature>
<feature type="binding site" evidence="1">
    <location>
        <position position="83"/>
    </location>
    <ligand>
        <name>anthranilate</name>
        <dbReference type="ChEBI" id="CHEBI:16567"/>
        <label>1</label>
    </ligand>
</feature>
<feature type="binding site" evidence="1">
    <location>
        <begin position="86"/>
        <end position="87"/>
    </location>
    <ligand>
        <name>5-phospho-alpha-D-ribose 1-diphosphate</name>
        <dbReference type="ChEBI" id="CHEBI:58017"/>
    </ligand>
</feature>
<feature type="binding site" evidence="1">
    <location>
        <position position="91"/>
    </location>
    <ligand>
        <name>5-phospho-alpha-D-ribose 1-diphosphate</name>
        <dbReference type="ChEBI" id="CHEBI:58017"/>
    </ligand>
</feature>
<feature type="binding site" evidence="1">
    <location>
        <begin position="93"/>
        <end position="96"/>
    </location>
    <ligand>
        <name>5-phospho-alpha-D-ribose 1-diphosphate</name>
        <dbReference type="ChEBI" id="CHEBI:58017"/>
    </ligand>
</feature>
<feature type="binding site" evidence="1">
    <location>
        <position position="95"/>
    </location>
    <ligand>
        <name>Mg(2+)</name>
        <dbReference type="ChEBI" id="CHEBI:18420"/>
        <label>1</label>
    </ligand>
</feature>
<feature type="binding site" evidence="1">
    <location>
        <begin position="111"/>
        <end position="119"/>
    </location>
    <ligand>
        <name>5-phospho-alpha-D-ribose 1-diphosphate</name>
        <dbReference type="ChEBI" id="CHEBI:58017"/>
    </ligand>
</feature>
<feature type="binding site" evidence="1">
    <location>
        <position position="123"/>
    </location>
    <ligand>
        <name>5-phospho-alpha-D-ribose 1-diphosphate</name>
        <dbReference type="ChEBI" id="CHEBI:58017"/>
    </ligand>
</feature>
<feature type="binding site" evidence="1">
    <location>
        <position position="169"/>
    </location>
    <ligand>
        <name>anthranilate</name>
        <dbReference type="ChEBI" id="CHEBI:16567"/>
        <label>2</label>
    </ligand>
</feature>
<feature type="binding site" evidence="1">
    <location>
        <position position="228"/>
    </location>
    <ligand>
        <name>Mg(2+)</name>
        <dbReference type="ChEBI" id="CHEBI:18420"/>
        <label>2</label>
    </ligand>
</feature>
<feature type="binding site" evidence="1">
    <location>
        <position position="229"/>
    </location>
    <ligand>
        <name>Mg(2+)</name>
        <dbReference type="ChEBI" id="CHEBI:18420"/>
        <label>1</label>
    </ligand>
</feature>
<feature type="binding site" evidence="1">
    <location>
        <position position="229"/>
    </location>
    <ligand>
        <name>Mg(2+)</name>
        <dbReference type="ChEBI" id="CHEBI:18420"/>
        <label>2</label>
    </ligand>
</feature>
<dbReference type="EC" id="2.4.2.18" evidence="1"/>
<dbReference type="EMBL" id="CP000555">
    <property type="protein sequence ID" value="ABM96414.1"/>
    <property type="molecule type" value="Genomic_DNA"/>
</dbReference>
<dbReference type="RefSeq" id="WP_011831034.1">
    <property type="nucleotide sequence ID" value="NC_008825.1"/>
</dbReference>
<dbReference type="SMR" id="A2SLH5"/>
<dbReference type="STRING" id="420662.Mpe_A3461"/>
<dbReference type="KEGG" id="mpt:Mpe_A3461"/>
<dbReference type="eggNOG" id="COG0547">
    <property type="taxonomic scope" value="Bacteria"/>
</dbReference>
<dbReference type="HOGENOM" id="CLU_034315_2_1_4"/>
<dbReference type="UniPathway" id="UPA00035">
    <property type="reaction ID" value="UER00041"/>
</dbReference>
<dbReference type="Proteomes" id="UP000000366">
    <property type="component" value="Chromosome"/>
</dbReference>
<dbReference type="GO" id="GO:0005829">
    <property type="term" value="C:cytosol"/>
    <property type="evidence" value="ECO:0007669"/>
    <property type="project" value="TreeGrafter"/>
</dbReference>
<dbReference type="GO" id="GO:0004048">
    <property type="term" value="F:anthranilate phosphoribosyltransferase activity"/>
    <property type="evidence" value="ECO:0007669"/>
    <property type="project" value="UniProtKB-UniRule"/>
</dbReference>
<dbReference type="GO" id="GO:0000287">
    <property type="term" value="F:magnesium ion binding"/>
    <property type="evidence" value="ECO:0007669"/>
    <property type="project" value="UniProtKB-UniRule"/>
</dbReference>
<dbReference type="GO" id="GO:0000162">
    <property type="term" value="P:L-tryptophan biosynthetic process"/>
    <property type="evidence" value="ECO:0007669"/>
    <property type="project" value="UniProtKB-UniRule"/>
</dbReference>
<dbReference type="FunFam" id="1.20.970.10:FF:000006">
    <property type="entry name" value="Anthranilate phosphoribosyltransferase"/>
    <property type="match status" value="1"/>
</dbReference>
<dbReference type="FunFam" id="3.40.1030.10:FF:000002">
    <property type="entry name" value="Anthranilate phosphoribosyltransferase"/>
    <property type="match status" value="1"/>
</dbReference>
<dbReference type="Gene3D" id="3.40.1030.10">
    <property type="entry name" value="Nucleoside phosphorylase/phosphoribosyltransferase catalytic domain"/>
    <property type="match status" value="1"/>
</dbReference>
<dbReference type="Gene3D" id="1.20.970.10">
    <property type="entry name" value="Transferase, Pyrimidine Nucleoside Phosphorylase, Chain C"/>
    <property type="match status" value="1"/>
</dbReference>
<dbReference type="HAMAP" id="MF_00211">
    <property type="entry name" value="TrpD"/>
    <property type="match status" value="1"/>
</dbReference>
<dbReference type="InterPro" id="IPR005940">
    <property type="entry name" value="Anthranilate_Pribosyl_Tfrase"/>
</dbReference>
<dbReference type="InterPro" id="IPR000312">
    <property type="entry name" value="Glycosyl_Trfase_fam3"/>
</dbReference>
<dbReference type="InterPro" id="IPR017459">
    <property type="entry name" value="Glycosyl_Trfase_fam3_N_dom"/>
</dbReference>
<dbReference type="InterPro" id="IPR036320">
    <property type="entry name" value="Glycosyl_Trfase_fam3_N_dom_sf"/>
</dbReference>
<dbReference type="InterPro" id="IPR035902">
    <property type="entry name" value="Nuc_phospho_transferase"/>
</dbReference>
<dbReference type="NCBIfam" id="TIGR01245">
    <property type="entry name" value="trpD"/>
    <property type="match status" value="1"/>
</dbReference>
<dbReference type="PANTHER" id="PTHR43285">
    <property type="entry name" value="ANTHRANILATE PHOSPHORIBOSYLTRANSFERASE"/>
    <property type="match status" value="1"/>
</dbReference>
<dbReference type="PANTHER" id="PTHR43285:SF2">
    <property type="entry name" value="ANTHRANILATE PHOSPHORIBOSYLTRANSFERASE"/>
    <property type="match status" value="1"/>
</dbReference>
<dbReference type="Pfam" id="PF02885">
    <property type="entry name" value="Glycos_trans_3N"/>
    <property type="match status" value="1"/>
</dbReference>
<dbReference type="Pfam" id="PF00591">
    <property type="entry name" value="Glycos_transf_3"/>
    <property type="match status" value="1"/>
</dbReference>
<dbReference type="SUPFAM" id="SSF52418">
    <property type="entry name" value="Nucleoside phosphorylase/phosphoribosyltransferase catalytic domain"/>
    <property type="match status" value="1"/>
</dbReference>
<dbReference type="SUPFAM" id="SSF47648">
    <property type="entry name" value="Nucleoside phosphorylase/phosphoribosyltransferase N-terminal domain"/>
    <property type="match status" value="1"/>
</dbReference>
<name>TRPD_METPP</name>
<sequence length="344" mass="36128">MITDTAALQRTIEHREIFHDEMLHLMRRIMSGEMSPVMIAALAVGLRVKKESIGEIAAAATVMREFATPVPVADTEHLVDLCGTGGDAAHTFNISTTAMFVAAAAGARVAKHGGRSVSSTSGSADVLEALGASIDLAPAQVAECLAESGIGFMFAPNHHPAMKHAGPVRKELGVRTIFNILGPLTNPAGAPNQLMGVFHPDLVGIQVRVLQRLGSRHVLVVYGMNGMDEISLSGETLIGELKDGEVREYTVHPSDFGLPVYDTRGLKVASKDESVGCIRRALADEAGPVRDIVLLNAGAALYAADVAPSIGEGVRQAREAVASGAAAKTLERFVATTRRLKGAA</sequence>
<organism>
    <name type="scientific">Methylibium petroleiphilum (strain ATCC BAA-1232 / LMG 22953 / PM1)</name>
    <dbReference type="NCBI Taxonomy" id="420662"/>
    <lineage>
        <taxon>Bacteria</taxon>
        <taxon>Pseudomonadati</taxon>
        <taxon>Pseudomonadota</taxon>
        <taxon>Betaproteobacteria</taxon>
        <taxon>Burkholderiales</taxon>
        <taxon>Sphaerotilaceae</taxon>
        <taxon>Methylibium</taxon>
    </lineage>
</organism>
<protein>
    <recommendedName>
        <fullName evidence="1">Anthranilate phosphoribosyltransferase</fullName>
        <ecNumber evidence="1">2.4.2.18</ecNumber>
    </recommendedName>
</protein>